<accession>Q95175</accession>
<sequence length="52" mass="6366">MVWSRDQRRKVALENPHMQNSEISKRLGYQWKMLTESEKWPFFEEAQRLQAA</sequence>
<comment type="function">
    <text evidence="1 2">Transcriptional regulator that controls a genetic switch in male development. It is necessary and sufficient for initiating male sex determination by directing the development of supporting cell precursors (pre-Sertoli cells) as Sertoli rather than granulosa cells. Involved in different aspects of gene regulation including promoter activation or repression. Binds to the DNA consensus sequence 5'-[AT]AACAA[AT]-3'. SRY HMG box recognizes DNA by partial intercalation in the minor groove and promotes DNA bending. Also involved in pre-mRNA splicing (By similarity). In male adult brain involved in the maintenance of motor functions of dopaminergic neurons (By similarity).</text>
</comment>
<comment type="subunit">
    <text evidence="2">Interacts with CALM, EP300, HDAC3, KPNB1, ZNF208 isoform KRAB-O, PARP1, SLC9A3R2 and WT1. The interaction with EP300 modulates its DNA-binding activity. The interaction with KPNB1 is sensitive to dissociation by Ran in the GTP-bound form. Interaction with PARP1 impaired its DNA-binding activity.</text>
</comment>
<comment type="subcellular location">
    <subcellularLocation>
        <location evidence="2">Nucleus speckle</location>
    </subcellularLocation>
    <subcellularLocation>
        <location evidence="2">Cytoplasm</location>
    </subcellularLocation>
    <subcellularLocation>
        <location evidence="2">Nucleus</location>
    </subcellularLocation>
</comment>
<comment type="similarity">
    <text evidence="4">Belongs to the SRY family.</text>
</comment>
<comment type="online information" name="Protein Spotlight">
    <link uri="https://www.proteinspotlight.org/back_issues/080"/>
    <text>The tenuous nature of sex - Issue 80 of March 2007</text>
</comment>
<organism>
    <name type="scientific">Crocidura suaveolens</name>
    <name type="common">Lesser white-toothed shrew</name>
    <name type="synonym">Scilly shrew</name>
    <dbReference type="NCBI Taxonomy" id="52631"/>
    <lineage>
        <taxon>Eukaryota</taxon>
        <taxon>Metazoa</taxon>
        <taxon>Chordata</taxon>
        <taxon>Craniata</taxon>
        <taxon>Vertebrata</taxon>
        <taxon>Euteleostomi</taxon>
        <taxon>Mammalia</taxon>
        <taxon>Eutheria</taxon>
        <taxon>Laurasiatheria</taxon>
        <taxon>Eulipotyphla</taxon>
        <taxon>Soricidae</taxon>
        <taxon>Crocidurinae</taxon>
        <taxon>Crocidura</taxon>
    </lineage>
</organism>
<protein>
    <recommendedName>
        <fullName>Sex-determining region Y protein</fullName>
    </recommendedName>
    <alternativeName>
        <fullName>Testis-determining factor</fullName>
    </alternativeName>
</protein>
<evidence type="ECO:0000250" key="1">
    <source>
        <dbReference type="UniProtKB" id="P36394"/>
    </source>
</evidence>
<evidence type="ECO:0000250" key="2">
    <source>
        <dbReference type="UniProtKB" id="Q05066"/>
    </source>
</evidence>
<evidence type="ECO:0000255" key="3">
    <source>
        <dbReference type="PROSITE-ProRule" id="PRU00267"/>
    </source>
</evidence>
<evidence type="ECO:0000305" key="4"/>
<reference key="1">
    <citation type="journal article" date="1996" name="Mamm. Genome">
        <title>High sequence identity between the SRY HMG box from humans and insectivores.</title>
        <authorList>
            <person name="Sanchez A."/>
            <person name="Bullejos M."/>
            <person name="Burgos M."/>
            <person name="Hera C."/>
            <person name="Jimnez R."/>
            <person name="Diaz de la Guardia R."/>
        </authorList>
    </citation>
    <scope>NUCLEOTIDE SEQUENCE [GENOMIC DNA]</scope>
    <source>
        <tissue>Spleen</tissue>
    </source>
</reference>
<keyword id="KW-0010">Activator</keyword>
<keyword id="KW-0112">Calmodulin-binding</keyword>
<keyword id="KW-0963">Cytoplasm</keyword>
<keyword id="KW-0221">Differentiation</keyword>
<keyword id="KW-0238">DNA-binding</keyword>
<keyword id="KW-0539">Nucleus</keyword>
<keyword id="KW-0726">Sexual differentiation</keyword>
<keyword id="KW-0804">Transcription</keyword>
<keyword id="KW-0805">Transcription regulation</keyword>
<feature type="chain" id="PRO_0000048656" description="Sex-determining region Y protein">
    <location>
        <begin position="1" status="less than"/>
        <end position="52" status="greater than"/>
    </location>
</feature>
<feature type="DNA-binding region" description="HMG box" evidence="3">
    <location>
        <begin position="1" status="less than"/>
        <end position="52" status="greater than"/>
    </location>
</feature>
<feature type="non-terminal residue">
    <location>
        <position position="1"/>
    </location>
</feature>
<feature type="non-terminal residue">
    <location>
        <position position="52"/>
    </location>
</feature>
<name>SRY_CROSU</name>
<dbReference type="EMBL" id="X90865">
    <property type="protein sequence ID" value="CAA62375.1"/>
    <property type="molecule type" value="Genomic_DNA"/>
</dbReference>
<dbReference type="SMR" id="Q95175"/>
<dbReference type="GO" id="GO:0005737">
    <property type="term" value="C:cytoplasm"/>
    <property type="evidence" value="ECO:0007669"/>
    <property type="project" value="UniProtKB-SubCell"/>
</dbReference>
<dbReference type="GO" id="GO:0016607">
    <property type="term" value="C:nuclear speck"/>
    <property type="evidence" value="ECO:0007669"/>
    <property type="project" value="UniProtKB-SubCell"/>
</dbReference>
<dbReference type="GO" id="GO:0005634">
    <property type="term" value="C:nucleus"/>
    <property type="evidence" value="ECO:0000250"/>
    <property type="project" value="UniProtKB"/>
</dbReference>
<dbReference type="GO" id="GO:0005516">
    <property type="term" value="F:calmodulin binding"/>
    <property type="evidence" value="ECO:0007669"/>
    <property type="project" value="UniProtKB-KW"/>
</dbReference>
<dbReference type="GO" id="GO:0001228">
    <property type="term" value="F:DNA-binding transcription activator activity, RNA polymerase II-specific"/>
    <property type="evidence" value="ECO:0007669"/>
    <property type="project" value="TreeGrafter"/>
</dbReference>
<dbReference type="GO" id="GO:0000978">
    <property type="term" value="F:RNA polymerase II cis-regulatory region sequence-specific DNA binding"/>
    <property type="evidence" value="ECO:0007669"/>
    <property type="project" value="TreeGrafter"/>
</dbReference>
<dbReference type="GO" id="GO:0030154">
    <property type="term" value="P:cell differentiation"/>
    <property type="evidence" value="ECO:0007669"/>
    <property type="project" value="UniProtKB-KW"/>
</dbReference>
<dbReference type="GO" id="GO:0007548">
    <property type="term" value="P:sex differentiation"/>
    <property type="evidence" value="ECO:0007669"/>
    <property type="project" value="UniProtKB-KW"/>
</dbReference>
<dbReference type="FunFam" id="1.10.30.10:FF:000088">
    <property type="entry name" value="Sex-determining region Y protein"/>
    <property type="match status" value="1"/>
</dbReference>
<dbReference type="Gene3D" id="1.10.30.10">
    <property type="entry name" value="High mobility group box domain"/>
    <property type="match status" value="1"/>
</dbReference>
<dbReference type="InterPro" id="IPR009071">
    <property type="entry name" value="HMG_box_dom"/>
</dbReference>
<dbReference type="InterPro" id="IPR036910">
    <property type="entry name" value="HMG_box_dom_sf"/>
</dbReference>
<dbReference type="InterPro" id="IPR050140">
    <property type="entry name" value="SRY-related_HMG-box_TF-like"/>
</dbReference>
<dbReference type="PANTHER" id="PTHR10270:SF161">
    <property type="entry name" value="SEX-DETERMINING REGION Y PROTEIN"/>
    <property type="match status" value="1"/>
</dbReference>
<dbReference type="PANTHER" id="PTHR10270">
    <property type="entry name" value="SOX TRANSCRIPTION FACTOR"/>
    <property type="match status" value="1"/>
</dbReference>
<dbReference type="Pfam" id="PF00505">
    <property type="entry name" value="HMG_box"/>
    <property type="match status" value="1"/>
</dbReference>
<dbReference type="SMART" id="SM00398">
    <property type="entry name" value="HMG"/>
    <property type="match status" value="1"/>
</dbReference>
<dbReference type="SUPFAM" id="SSF47095">
    <property type="entry name" value="HMG-box"/>
    <property type="match status" value="1"/>
</dbReference>
<dbReference type="PROSITE" id="PS50118">
    <property type="entry name" value="HMG_BOX_2"/>
    <property type="match status" value="1"/>
</dbReference>
<gene>
    <name type="primary">SRY</name>
    <name type="synonym">TDF</name>
</gene>
<proteinExistence type="inferred from homology"/>